<accession>Q8XZR0</accession>
<gene>
    <name type="primary">clpB</name>
    <name type="ordered locus">RSc1335</name>
    <name type="ORF">RS02857</name>
</gene>
<organism>
    <name type="scientific">Ralstonia nicotianae (strain ATCC BAA-1114 / GMI1000)</name>
    <name type="common">Ralstonia solanacearum</name>
    <dbReference type="NCBI Taxonomy" id="267608"/>
    <lineage>
        <taxon>Bacteria</taxon>
        <taxon>Pseudomonadati</taxon>
        <taxon>Pseudomonadota</taxon>
        <taxon>Betaproteobacteria</taxon>
        <taxon>Burkholderiales</taxon>
        <taxon>Burkholderiaceae</taxon>
        <taxon>Ralstonia</taxon>
        <taxon>Ralstonia solanacearum species complex</taxon>
    </lineage>
</organism>
<comment type="function">
    <text evidence="1">Part of a stress-induced multi-chaperone system, it is involved in the recovery of the cell from heat-induced damage, in cooperation with DnaK, DnaJ and GrpE. Acts before DnaK, in the processing of protein aggregates. Protein binding stimulates the ATPase activity; ATP hydrolysis unfolds the denatured protein aggregates, which probably helps expose new hydrophobic binding sites on the surface of ClpB-bound aggregates, contributing to the solubilization and refolding of denatured protein aggregates by DnaK (By similarity).</text>
</comment>
<comment type="subunit">
    <text evidence="1">Homohexamer. The oligomerization is ATP-dependent (By similarity).</text>
</comment>
<comment type="subcellular location">
    <subcellularLocation>
        <location evidence="3">Cytoplasm</location>
    </subcellularLocation>
</comment>
<comment type="domain">
    <text evidence="1">The Clp repeat (R) domain probably functions as a substrate-discriminating domain, recruiting aggregated proteins to the ClpB hexamer and/or stabilizing bound proteins. The NBD2 domain is responsible for oligomerization, whereas the NBD1 domain stabilizes the hexamer probably in an ATP-dependent manner. The movement of the coiled-coil domain is essential for ClpB ability to rescue proteins from an aggregated state, probably by pulling apart large aggregated proteins, which are bound between the coiled-coils motifs of adjacent ClpB subunits in the functional hexamer (By similarity).</text>
</comment>
<comment type="similarity">
    <text evidence="3">Belongs to the ClpA/ClpB family.</text>
</comment>
<reference key="1">
    <citation type="journal article" date="2002" name="Nature">
        <title>Genome sequence of the plant pathogen Ralstonia solanacearum.</title>
        <authorList>
            <person name="Salanoubat M."/>
            <person name="Genin S."/>
            <person name="Artiguenave F."/>
            <person name="Gouzy J."/>
            <person name="Mangenot S."/>
            <person name="Arlat M."/>
            <person name="Billault A."/>
            <person name="Brottier P."/>
            <person name="Camus J.-C."/>
            <person name="Cattolico L."/>
            <person name="Chandler M."/>
            <person name="Choisne N."/>
            <person name="Claudel-Renard C."/>
            <person name="Cunnac S."/>
            <person name="Demange N."/>
            <person name="Gaspin C."/>
            <person name="Lavie M."/>
            <person name="Moisan A."/>
            <person name="Robert C."/>
            <person name="Saurin W."/>
            <person name="Schiex T."/>
            <person name="Siguier P."/>
            <person name="Thebault P."/>
            <person name="Whalen M."/>
            <person name="Wincker P."/>
            <person name="Levy M."/>
            <person name="Weissenbach J."/>
            <person name="Boucher C.A."/>
        </authorList>
    </citation>
    <scope>NUCLEOTIDE SEQUENCE [LARGE SCALE GENOMIC DNA]</scope>
    <source>
        <strain>ATCC BAA-1114 / GMI1000</strain>
    </source>
</reference>
<dbReference type="EMBL" id="AL646052">
    <property type="protein sequence ID" value="CAD15037.1"/>
    <property type="molecule type" value="Genomic_DNA"/>
</dbReference>
<dbReference type="RefSeq" id="WP_011001284.1">
    <property type="nucleotide sequence ID" value="NC_003295.1"/>
</dbReference>
<dbReference type="SMR" id="Q8XZR0"/>
<dbReference type="STRING" id="267608.RSc1335"/>
<dbReference type="EnsemblBacteria" id="CAD15037">
    <property type="protein sequence ID" value="CAD15037"/>
    <property type="gene ID" value="RSc1335"/>
</dbReference>
<dbReference type="KEGG" id="rso:RSc1335"/>
<dbReference type="PATRIC" id="fig|267608.8.peg.1360"/>
<dbReference type="eggNOG" id="COG0542">
    <property type="taxonomic scope" value="Bacteria"/>
</dbReference>
<dbReference type="HOGENOM" id="CLU_005070_4_0_4"/>
<dbReference type="Proteomes" id="UP000001436">
    <property type="component" value="Chromosome"/>
</dbReference>
<dbReference type="GO" id="GO:0005737">
    <property type="term" value="C:cytoplasm"/>
    <property type="evidence" value="ECO:0007669"/>
    <property type="project" value="UniProtKB-SubCell"/>
</dbReference>
<dbReference type="GO" id="GO:0005524">
    <property type="term" value="F:ATP binding"/>
    <property type="evidence" value="ECO:0007669"/>
    <property type="project" value="UniProtKB-KW"/>
</dbReference>
<dbReference type="GO" id="GO:0016887">
    <property type="term" value="F:ATP hydrolysis activity"/>
    <property type="evidence" value="ECO:0007669"/>
    <property type="project" value="InterPro"/>
</dbReference>
<dbReference type="GO" id="GO:0034605">
    <property type="term" value="P:cellular response to heat"/>
    <property type="evidence" value="ECO:0007669"/>
    <property type="project" value="TreeGrafter"/>
</dbReference>
<dbReference type="GO" id="GO:0042026">
    <property type="term" value="P:protein refolding"/>
    <property type="evidence" value="ECO:0007669"/>
    <property type="project" value="InterPro"/>
</dbReference>
<dbReference type="CDD" id="cd00009">
    <property type="entry name" value="AAA"/>
    <property type="match status" value="1"/>
</dbReference>
<dbReference type="CDD" id="cd19499">
    <property type="entry name" value="RecA-like_ClpB_Hsp104-like"/>
    <property type="match status" value="1"/>
</dbReference>
<dbReference type="FunFam" id="1.10.8.60:FF:000017">
    <property type="entry name" value="ATP-dependent chaperone ClpB"/>
    <property type="match status" value="1"/>
</dbReference>
<dbReference type="FunFam" id="3.40.50.300:FF:000120">
    <property type="entry name" value="ATP-dependent chaperone ClpB"/>
    <property type="match status" value="1"/>
</dbReference>
<dbReference type="FunFam" id="3.40.50.300:FF:000025">
    <property type="entry name" value="ATP-dependent Clp protease subunit"/>
    <property type="match status" value="1"/>
</dbReference>
<dbReference type="FunFam" id="3.40.50.300:FF:000010">
    <property type="entry name" value="Chaperone clpB 1, putative"/>
    <property type="match status" value="1"/>
</dbReference>
<dbReference type="Gene3D" id="1.10.8.60">
    <property type="match status" value="1"/>
</dbReference>
<dbReference type="Gene3D" id="1.10.1780.10">
    <property type="entry name" value="Clp, N-terminal domain"/>
    <property type="match status" value="1"/>
</dbReference>
<dbReference type="Gene3D" id="3.40.50.300">
    <property type="entry name" value="P-loop containing nucleotide triphosphate hydrolases"/>
    <property type="match status" value="3"/>
</dbReference>
<dbReference type="InterPro" id="IPR003593">
    <property type="entry name" value="AAA+_ATPase"/>
</dbReference>
<dbReference type="InterPro" id="IPR003959">
    <property type="entry name" value="ATPase_AAA_core"/>
</dbReference>
<dbReference type="InterPro" id="IPR017730">
    <property type="entry name" value="Chaperonin_ClpB"/>
</dbReference>
<dbReference type="InterPro" id="IPR019489">
    <property type="entry name" value="Clp_ATPase_C"/>
</dbReference>
<dbReference type="InterPro" id="IPR036628">
    <property type="entry name" value="Clp_N_dom_sf"/>
</dbReference>
<dbReference type="InterPro" id="IPR004176">
    <property type="entry name" value="Clp_R_dom"/>
</dbReference>
<dbReference type="InterPro" id="IPR001270">
    <property type="entry name" value="ClpA/B"/>
</dbReference>
<dbReference type="InterPro" id="IPR018368">
    <property type="entry name" value="ClpA/B_CS1"/>
</dbReference>
<dbReference type="InterPro" id="IPR028299">
    <property type="entry name" value="ClpA/B_CS2"/>
</dbReference>
<dbReference type="InterPro" id="IPR041546">
    <property type="entry name" value="ClpA/ClpB_AAA_lid"/>
</dbReference>
<dbReference type="InterPro" id="IPR050130">
    <property type="entry name" value="ClpA_ClpB"/>
</dbReference>
<dbReference type="InterPro" id="IPR027417">
    <property type="entry name" value="P-loop_NTPase"/>
</dbReference>
<dbReference type="NCBIfam" id="TIGR03346">
    <property type="entry name" value="chaperone_ClpB"/>
    <property type="match status" value="1"/>
</dbReference>
<dbReference type="PANTHER" id="PTHR11638">
    <property type="entry name" value="ATP-DEPENDENT CLP PROTEASE"/>
    <property type="match status" value="1"/>
</dbReference>
<dbReference type="PANTHER" id="PTHR11638:SF18">
    <property type="entry name" value="HEAT SHOCK PROTEIN 104"/>
    <property type="match status" value="1"/>
</dbReference>
<dbReference type="Pfam" id="PF00004">
    <property type="entry name" value="AAA"/>
    <property type="match status" value="1"/>
</dbReference>
<dbReference type="Pfam" id="PF07724">
    <property type="entry name" value="AAA_2"/>
    <property type="match status" value="1"/>
</dbReference>
<dbReference type="Pfam" id="PF17871">
    <property type="entry name" value="AAA_lid_9"/>
    <property type="match status" value="1"/>
</dbReference>
<dbReference type="Pfam" id="PF02861">
    <property type="entry name" value="Clp_N"/>
    <property type="match status" value="2"/>
</dbReference>
<dbReference type="Pfam" id="PF10431">
    <property type="entry name" value="ClpB_D2-small"/>
    <property type="match status" value="1"/>
</dbReference>
<dbReference type="PRINTS" id="PR00300">
    <property type="entry name" value="CLPPROTEASEA"/>
</dbReference>
<dbReference type="SMART" id="SM00382">
    <property type="entry name" value="AAA"/>
    <property type="match status" value="2"/>
</dbReference>
<dbReference type="SMART" id="SM01086">
    <property type="entry name" value="ClpB_D2-small"/>
    <property type="match status" value="1"/>
</dbReference>
<dbReference type="SUPFAM" id="SSF81923">
    <property type="entry name" value="Double Clp-N motif"/>
    <property type="match status" value="1"/>
</dbReference>
<dbReference type="SUPFAM" id="SSF52540">
    <property type="entry name" value="P-loop containing nucleoside triphosphate hydrolases"/>
    <property type="match status" value="2"/>
</dbReference>
<dbReference type="PROSITE" id="PS51903">
    <property type="entry name" value="CLP_R"/>
    <property type="match status" value="1"/>
</dbReference>
<dbReference type="PROSITE" id="PS00870">
    <property type="entry name" value="CLPAB_1"/>
    <property type="match status" value="1"/>
</dbReference>
<dbReference type="PROSITE" id="PS00871">
    <property type="entry name" value="CLPAB_2"/>
    <property type="match status" value="1"/>
</dbReference>
<name>CLPB_RALN1</name>
<sequence length="862" mass="95559">MRLDKLTTRFQEALADAQSLALGNDNPYIEPLHLLLAMLRQPDGATKNLLARAGVNAKGLEIALDNAIKRLPQVQGGEQVQVGRDLGSLLQATEKEGIKRGDQFIASELFLLAVADDKGEAGRVAREHGLARRALEAAIDAVRGGQTVGSAEAESQREALKKYTIDLTEQARIGKLDPVIGRDDEIRRAIQILQRRTKNNPVLIGEPGVGKTAIVEGLAQRIINGEVPESLKNKRVLVLDMAGLLAGAKYRGEFEERLKAVLNDIAKEEGQTILFIDEIHTMVGAGKAEGAIDAGNMLKPALARGELHCIGATTLDEYRKYIEKDAALERRFQKVLVDEPSVEATIAILRGLQEKYELHHGVEITDPAIVAAAELSHRYITDRFLPDKAIDLIDEAAARIKMEIDSKPEAMDKLDRRLIQLKIEREAVKKETDEASQKRLELIEQEIERLQKEYADLEEIWKAEKGAAQGAAAVKEEIDRVKLEIARLQREGKLDKVAELQYGRLPELEGKLKAATAAEASGQRPPNKLLRTQVGAEEIAEVVSRATGIPVSKMMQGERDKLLRMEDRLHERVVGQDEAVRLVSDAIRRSRAGIADENKPYGSFLFLGPTGVGKTELCKALAGFLFDSEEHLIRIDMSEFMEKHSVSRLIGAPPGYVGYEEGGYLTEAVRRKPYSVVLLDEVEKAHPDVFNILLQVLDDGRLTDGQGRTVDFKNTVIVMTSNLGSQLIQQMASESPDVIKGAVWQEVKTHFRPEFLNRIDEVVVFHALDQGHIESIARIQLQRLAARLAHMDLTLEISDPAVAKLASAGYDPVFGARPLKRAIQQQIENPVARMILEGRFTPKDVVPVDYHDGHFTFDRVVR</sequence>
<protein>
    <recommendedName>
        <fullName>Chaperone protein ClpB</fullName>
    </recommendedName>
</protein>
<keyword id="KW-0067">ATP-binding</keyword>
<keyword id="KW-0143">Chaperone</keyword>
<keyword id="KW-0175">Coiled coil</keyword>
<keyword id="KW-0963">Cytoplasm</keyword>
<keyword id="KW-0547">Nucleotide-binding</keyword>
<keyword id="KW-1185">Reference proteome</keyword>
<keyword id="KW-0677">Repeat</keyword>
<keyword id="KW-0346">Stress response</keyword>
<proteinExistence type="inferred from homology"/>
<evidence type="ECO:0000250" key="1"/>
<evidence type="ECO:0000255" key="2">
    <source>
        <dbReference type="PROSITE-ProRule" id="PRU01251"/>
    </source>
</evidence>
<evidence type="ECO:0000305" key="3"/>
<feature type="chain" id="PRO_0000191164" description="Chaperone protein ClpB">
    <location>
        <begin position="1"/>
        <end position="862"/>
    </location>
</feature>
<feature type="domain" description="Clp R" evidence="2">
    <location>
        <begin position="3"/>
        <end position="145"/>
    </location>
</feature>
<feature type="region of interest" description="Repeat 1" evidence="2">
    <location>
        <begin position="6"/>
        <end position="71"/>
    </location>
</feature>
<feature type="region of interest" description="Repeat 2" evidence="2">
    <location>
        <begin position="82"/>
        <end position="145"/>
    </location>
</feature>
<feature type="region of interest" description="NBD1" evidence="1">
    <location>
        <begin position="158"/>
        <end position="339"/>
    </location>
</feature>
<feature type="region of interest" description="Linker" evidence="1">
    <location>
        <begin position="340"/>
        <end position="548"/>
    </location>
</feature>
<feature type="region of interest" description="NBD2" evidence="1">
    <location>
        <begin position="558"/>
        <end position="767"/>
    </location>
</feature>
<feature type="region of interest" description="C-terminal" evidence="1">
    <location>
        <begin position="768"/>
        <end position="862"/>
    </location>
</feature>
<feature type="coiled-coil region" evidence="1">
    <location>
        <begin position="390"/>
        <end position="524"/>
    </location>
</feature>
<feature type="binding site" evidence="1">
    <location>
        <begin position="205"/>
        <end position="212"/>
    </location>
    <ligand>
        <name>ATP</name>
        <dbReference type="ChEBI" id="CHEBI:30616"/>
        <label>1</label>
    </ligand>
</feature>
<feature type="binding site" evidence="1">
    <location>
        <begin position="608"/>
        <end position="615"/>
    </location>
    <ligand>
        <name>ATP</name>
        <dbReference type="ChEBI" id="CHEBI:30616"/>
        <label>2</label>
    </ligand>
</feature>